<comment type="function">
    <text evidence="1">Catalyzes the interconversion of L-alanine and D-alanine. May also act on other amino acids.</text>
</comment>
<comment type="catalytic activity">
    <reaction evidence="1">
        <text>L-alanine = D-alanine</text>
        <dbReference type="Rhea" id="RHEA:20249"/>
        <dbReference type="ChEBI" id="CHEBI:57416"/>
        <dbReference type="ChEBI" id="CHEBI:57972"/>
        <dbReference type="EC" id="5.1.1.1"/>
    </reaction>
</comment>
<comment type="cofactor">
    <cofactor evidence="1">
        <name>pyridoxal 5'-phosphate</name>
        <dbReference type="ChEBI" id="CHEBI:597326"/>
    </cofactor>
</comment>
<comment type="pathway">
    <text evidence="1">Amino-acid biosynthesis; D-alanine biosynthesis; D-alanine from L-alanine: step 1/1.</text>
</comment>
<comment type="similarity">
    <text evidence="1">Belongs to the alanine racemase family.</text>
</comment>
<sequence length="366" mass="39964">MISSFHRPTVARVNLQAIKENVASVQKHIPLGVKTYAVVKADAYGHGAVQVSKALLPQVDGYCVSNLDEALQLRQAGIDKEILILGVLLPNELKLAITRQVTVTVASLEWLAMAKQEWPDLKGLKVHIKIDSGMGRIGLRSVTEVDNLIAGLKSMGADVEGIFTHFATADEADDTKFNQQLQFFKKLIAGLEDKPRLVHASNSATSIWHSDTIFNAVRLGIVSYGLNPSGSDLSLPFPLQEALSLESSLVHVKMISAGDTVGYGATYTAKKSEYVGTVPIGYADGWTRNMQGFSVLVDGQFCEIIGRVSMDQLTIRLSKAYPLGTKVTLIGSNQQKNISTTDIANYRNTINYEVLCLLSDRIPRIY</sequence>
<evidence type="ECO:0000255" key="1">
    <source>
        <dbReference type="HAMAP-Rule" id="MF_01201"/>
    </source>
</evidence>
<dbReference type="EC" id="5.1.1.1" evidence="1"/>
<dbReference type="EMBL" id="AE009949">
    <property type="protein sequence ID" value="AAL98379.1"/>
    <property type="molecule type" value="Genomic_DNA"/>
</dbReference>
<dbReference type="RefSeq" id="WP_011018178.1">
    <property type="nucleotide sequence ID" value="NC_003485.1"/>
</dbReference>
<dbReference type="SMR" id="Q8NZK4"/>
<dbReference type="KEGG" id="spm:spyM18_1871"/>
<dbReference type="HOGENOM" id="CLU_028393_2_1_9"/>
<dbReference type="UniPathway" id="UPA00042">
    <property type="reaction ID" value="UER00497"/>
</dbReference>
<dbReference type="GO" id="GO:0005829">
    <property type="term" value="C:cytosol"/>
    <property type="evidence" value="ECO:0007669"/>
    <property type="project" value="TreeGrafter"/>
</dbReference>
<dbReference type="GO" id="GO:0008784">
    <property type="term" value="F:alanine racemase activity"/>
    <property type="evidence" value="ECO:0007669"/>
    <property type="project" value="UniProtKB-UniRule"/>
</dbReference>
<dbReference type="GO" id="GO:0030170">
    <property type="term" value="F:pyridoxal phosphate binding"/>
    <property type="evidence" value="ECO:0007669"/>
    <property type="project" value="UniProtKB-UniRule"/>
</dbReference>
<dbReference type="GO" id="GO:0030632">
    <property type="term" value="P:D-alanine biosynthetic process"/>
    <property type="evidence" value="ECO:0007669"/>
    <property type="project" value="UniProtKB-UniRule"/>
</dbReference>
<dbReference type="GO" id="GO:0009252">
    <property type="term" value="P:peptidoglycan biosynthetic process"/>
    <property type="evidence" value="ECO:0007669"/>
    <property type="project" value="TreeGrafter"/>
</dbReference>
<dbReference type="CDD" id="cd00430">
    <property type="entry name" value="PLPDE_III_AR"/>
    <property type="match status" value="1"/>
</dbReference>
<dbReference type="FunFam" id="2.40.37.10:FF:000006">
    <property type="entry name" value="Alanine racemase"/>
    <property type="match status" value="1"/>
</dbReference>
<dbReference type="FunFam" id="3.20.20.10:FF:000002">
    <property type="entry name" value="Alanine racemase"/>
    <property type="match status" value="1"/>
</dbReference>
<dbReference type="Gene3D" id="3.20.20.10">
    <property type="entry name" value="Alanine racemase"/>
    <property type="match status" value="1"/>
</dbReference>
<dbReference type="Gene3D" id="2.40.37.10">
    <property type="entry name" value="Lyase, Ornithine Decarboxylase, Chain A, domain 1"/>
    <property type="match status" value="1"/>
</dbReference>
<dbReference type="HAMAP" id="MF_01201">
    <property type="entry name" value="Ala_racemase"/>
    <property type="match status" value="1"/>
</dbReference>
<dbReference type="InterPro" id="IPR000821">
    <property type="entry name" value="Ala_racemase"/>
</dbReference>
<dbReference type="InterPro" id="IPR009006">
    <property type="entry name" value="Ala_racemase/Decarboxylase_C"/>
</dbReference>
<dbReference type="InterPro" id="IPR011079">
    <property type="entry name" value="Ala_racemase_C"/>
</dbReference>
<dbReference type="InterPro" id="IPR001608">
    <property type="entry name" value="Ala_racemase_N"/>
</dbReference>
<dbReference type="InterPro" id="IPR020622">
    <property type="entry name" value="Ala_racemase_pyridoxalP-BS"/>
</dbReference>
<dbReference type="InterPro" id="IPR029066">
    <property type="entry name" value="PLP-binding_barrel"/>
</dbReference>
<dbReference type="NCBIfam" id="TIGR00492">
    <property type="entry name" value="alr"/>
    <property type="match status" value="1"/>
</dbReference>
<dbReference type="PANTHER" id="PTHR30511">
    <property type="entry name" value="ALANINE RACEMASE"/>
    <property type="match status" value="1"/>
</dbReference>
<dbReference type="PANTHER" id="PTHR30511:SF0">
    <property type="entry name" value="ALANINE RACEMASE, CATABOLIC-RELATED"/>
    <property type="match status" value="1"/>
</dbReference>
<dbReference type="Pfam" id="PF00842">
    <property type="entry name" value="Ala_racemase_C"/>
    <property type="match status" value="1"/>
</dbReference>
<dbReference type="Pfam" id="PF01168">
    <property type="entry name" value="Ala_racemase_N"/>
    <property type="match status" value="1"/>
</dbReference>
<dbReference type="PRINTS" id="PR00992">
    <property type="entry name" value="ALARACEMASE"/>
</dbReference>
<dbReference type="SMART" id="SM01005">
    <property type="entry name" value="Ala_racemase_C"/>
    <property type="match status" value="1"/>
</dbReference>
<dbReference type="SUPFAM" id="SSF50621">
    <property type="entry name" value="Alanine racemase C-terminal domain-like"/>
    <property type="match status" value="1"/>
</dbReference>
<dbReference type="SUPFAM" id="SSF51419">
    <property type="entry name" value="PLP-binding barrel"/>
    <property type="match status" value="1"/>
</dbReference>
<dbReference type="PROSITE" id="PS00395">
    <property type="entry name" value="ALANINE_RACEMASE"/>
    <property type="match status" value="1"/>
</dbReference>
<reference key="1">
    <citation type="journal article" date="2002" name="Proc. Natl. Acad. Sci. U.S.A.">
        <title>Genome sequence and comparative microarray analysis of serotype M18 group A Streptococcus strains associated with acute rheumatic fever outbreaks.</title>
        <authorList>
            <person name="Smoot J.C."/>
            <person name="Barbian K.D."/>
            <person name="Van Gompel J.J."/>
            <person name="Smoot L.M."/>
            <person name="Chaussee M.S."/>
            <person name="Sylva G.L."/>
            <person name="Sturdevant D.E."/>
            <person name="Ricklefs S.M."/>
            <person name="Porcella S.F."/>
            <person name="Parkins L.D."/>
            <person name="Beres S.B."/>
            <person name="Campbell D.S."/>
            <person name="Smith T.M."/>
            <person name="Zhang Q."/>
            <person name="Kapur V."/>
            <person name="Daly J.A."/>
            <person name="Veasy L.G."/>
            <person name="Musser J.M."/>
        </authorList>
    </citation>
    <scope>NUCLEOTIDE SEQUENCE [LARGE SCALE GENOMIC DNA]</scope>
    <source>
        <strain>MGAS8232</strain>
    </source>
</reference>
<organism>
    <name type="scientific">Streptococcus pyogenes serotype M18 (strain MGAS8232)</name>
    <dbReference type="NCBI Taxonomy" id="186103"/>
    <lineage>
        <taxon>Bacteria</taxon>
        <taxon>Bacillati</taxon>
        <taxon>Bacillota</taxon>
        <taxon>Bacilli</taxon>
        <taxon>Lactobacillales</taxon>
        <taxon>Streptococcaceae</taxon>
        <taxon>Streptococcus</taxon>
    </lineage>
</organism>
<accession>Q8NZK4</accession>
<feature type="chain" id="PRO_0000114586" description="Alanine racemase">
    <location>
        <begin position="1"/>
        <end position="366"/>
    </location>
</feature>
<feature type="active site" description="Proton acceptor; specific for D-alanine" evidence="1">
    <location>
        <position position="40"/>
    </location>
</feature>
<feature type="active site" description="Proton acceptor; specific for L-alanine" evidence="1">
    <location>
        <position position="263"/>
    </location>
</feature>
<feature type="binding site" evidence="1">
    <location>
        <position position="136"/>
    </location>
    <ligand>
        <name>substrate</name>
    </ligand>
</feature>
<feature type="binding site" evidence="1">
    <location>
        <position position="310"/>
    </location>
    <ligand>
        <name>substrate</name>
    </ligand>
</feature>
<feature type="modified residue" description="N6-(pyridoxal phosphate)lysine" evidence="1">
    <location>
        <position position="40"/>
    </location>
</feature>
<proteinExistence type="inferred from homology"/>
<protein>
    <recommendedName>
        <fullName evidence="1">Alanine racemase</fullName>
        <ecNumber evidence="1">5.1.1.1</ecNumber>
    </recommendedName>
</protein>
<gene>
    <name type="primary">alr</name>
    <name type="ordered locus">spyM18_1871</name>
</gene>
<name>ALR_STRP8</name>
<keyword id="KW-0413">Isomerase</keyword>
<keyword id="KW-0663">Pyridoxal phosphate</keyword>